<keyword id="KW-1003">Cell membrane</keyword>
<keyword id="KW-0449">Lipoprotein</keyword>
<keyword id="KW-0472">Membrane</keyword>
<keyword id="KW-0564">Palmitate</keyword>
<keyword id="KW-0732">Signal</keyword>
<gene>
    <name type="ordered locus">SA2275</name>
</gene>
<reference key="1">
    <citation type="journal article" date="2001" name="Lancet">
        <title>Whole genome sequencing of meticillin-resistant Staphylococcus aureus.</title>
        <authorList>
            <person name="Kuroda M."/>
            <person name="Ohta T."/>
            <person name="Uchiyama I."/>
            <person name="Baba T."/>
            <person name="Yuzawa H."/>
            <person name="Kobayashi I."/>
            <person name="Cui L."/>
            <person name="Oguchi A."/>
            <person name="Aoki K."/>
            <person name="Nagai Y."/>
            <person name="Lian J.-Q."/>
            <person name="Ito T."/>
            <person name="Kanamori M."/>
            <person name="Matsumaru H."/>
            <person name="Maruyama A."/>
            <person name="Murakami H."/>
            <person name="Hosoyama A."/>
            <person name="Mizutani-Ui Y."/>
            <person name="Takahashi N.K."/>
            <person name="Sawano T."/>
            <person name="Inoue R."/>
            <person name="Kaito C."/>
            <person name="Sekimizu K."/>
            <person name="Hirakawa H."/>
            <person name="Kuhara S."/>
            <person name="Goto S."/>
            <person name="Yabuzaki J."/>
            <person name="Kanehisa M."/>
            <person name="Yamashita A."/>
            <person name="Oshima K."/>
            <person name="Furuya K."/>
            <person name="Yoshino C."/>
            <person name="Shiba T."/>
            <person name="Hattori M."/>
            <person name="Ogasawara N."/>
            <person name="Hayashi H."/>
            <person name="Hiramatsu K."/>
        </authorList>
    </citation>
    <scope>NUCLEOTIDE SEQUENCE [LARGE SCALE GENOMIC DNA]</scope>
    <source>
        <strain>N315</strain>
    </source>
</reference>
<protein>
    <recommendedName>
        <fullName>Uncharacterized lipoprotein SA2275</fullName>
    </recommendedName>
</protein>
<name>Y2275_STAAN</name>
<comment type="subcellular location">
    <subcellularLocation>
        <location evidence="1">Cell membrane</location>
        <topology evidence="1">Lipid-anchor</topology>
    </subcellularLocation>
</comment>
<comment type="similarity">
    <text evidence="2">Belongs to the staphylococcal tandem lipoprotein family.</text>
</comment>
<comment type="sequence caution" evidence="2">
    <conflict type="erroneous initiation">
        <sequence resource="EMBL-CDS" id="BAB43578"/>
    </conflict>
</comment>
<organism>
    <name type="scientific">Staphylococcus aureus (strain N315)</name>
    <dbReference type="NCBI Taxonomy" id="158879"/>
    <lineage>
        <taxon>Bacteria</taxon>
        <taxon>Bacillati</taxon>
        <taxon>Bacillota</taxon>
        <taxon>Bacilli</taxon>
        <taxon>Bacillales</taxon>
        <taxon>Staphylococcaceae</taxon>
        <taxon>Staphylococcus</taxon>
    </lineage>
</organism>
<feature type="signal peptide" evidence="1">
    <location>
        <begin position="1"/>
        <end position="22"/>
    </location>
</feature>
<feature type="chain" id="PRO_0000282141" description="Uncharacterized lipoprotein SA2275">
    <location>
        <begin position="23"/>
        <end position="257"/>
    </location>
</feature>
<feature type="lipid moiety-binding region" description="N-palmitoyl cysteine" evidence="1">
    <location>
        <position position="23"/>
    </location>
</feature>
<feature type="lipid moiety-binding region" description="S-diacylglycerol cysteine" evidence="1">
    <location>
        <position position="23"/>
    </location>
</feature>
<proteinExistence type="inferred from homology"/>
<accession>Q7A3L1</accession>
<sequence length="257" mass="30324">MIHSRKLRLWLYLVLLAVFIGACGMKKEESSKDKQIKENFNKTLSLYPTKNLEDFYDKEGFRDEEFEKGDKGTWIIHSKMTIETNGKNMESRGLVLYVDRNTRTTKGEFIVRELWEDKKGYSRSKEKEYPVKMEHNKIIPTKPIADDKLRKEIEDFKFFVQYGDFKDINDYKDGDISYNPNVPSYSAKYQLSNNDYNVKQLRKRYDIPTKKAPKLLLKGDGDLKGSSIGHKNLEFIFIENKEENIYFTDSINFKPTE</sequence>
<dbReference type="EMBL" id="BA000018">
    <property type="protein sequence ID" value="BAB43578.1"/>
    <property type="status" value="ALT_INIT"/>
    <property type="molecule type" value="Genomic_DNA"/>
</dbReference>
<dbReference type="PIR" id="H90051">
    <property type="entry name" value="H90051"/>
</dbReference>
<dbReference type="SMR" id="Q7A3L1"/>
<dbReference type="EnsemblBacteria" id="BAB43578">
    <property type="protein sequence ID" value="BAB43578"/>
    <property type="gene ID" value="BAB43578"/>
</dbReference>
<dbReference type="KEGG" id="sau:SA2275"/>
<dbReference type="HOGENOM" id="CLU_071589_0_1_9"/>
<dbReference type="GO" id="GO:0005886">
    <property type="term" value="C:plasma membrane"/>
    <property type="evidence" value="ECO:0007669"/>
    <property type="project" value="UniProtKB-SubCell"/>
</dbReference>
<dbReference type="Gene3D" id="2.50.20.40">
    <property type="match status" value="1"/>
</dbReference>
<dbReference type="InterPro" id="IPR007595">
    <property type="entry name" value="Csa"/>
</dbReference>
<dbReference type="InterPro" id="IPR038641">
    <property type="entry name" value="Csa_sf"/>
</dbReference>
<dbReference type="NCBIfam" id="TIGR01742">
    <property type="entry name" value="SA_tandem_lipo"/>
    <property type="match status" value="1"/>
</dbReference>
<dbReference type="Pfam" id="PF04507">
    <property type="entry name" value="DUF576"/>
    <property type="match status" value="1"/>
</dbReference>
<dbReference type="PROSITE" id="PS51257">
    <property type="entry name" value="PROKAR_LIPOPROTEIN"/>
    <property type="match status" value="1"/>
</dbReference>
<evidence type="ECO:0000255" key="1">
    <source>
        <dbReference type="PROSITE-ProRule" id="PRU00303"/>
    </source>
</evidence>
<evidence type="ECO:0000305" key="2"/>